<name>MAMH_PARM1</name>
<keyword id="KW-0091">Biomineralization</keyword>
<keyword id="KW-0406">Ion transport</keyword>
<keyword id="KW-0408">Iron</keyword>
<keyword id="KW-0410">Iron transport</keyword>
<keyword id="KW-1281">Magnetosome</keyword>
<keyword id="KW-0472">Membrane</keyword>
<keyword id="KW-0812">Transmembrane</keyword>
<keyword id="KW-1133">Transmembrane helix</keyword>
<keyword id="KW-0813">Transport</keyword>
<protein>
    <recommendedName>
        <fullName evidence="6">Magnetosome protein MamH</fullName>
    </recommendedName>
    <alternativeName>
        <fullName evidence="6">Probable magnetosome permease MamH</fullName>
    </alternativeName>
</protein>
<dbReference type="EMBL" id="AP007255">
    <property type="protein sequence ID" value="BAE49765.1"/>
    <property type="molecule type" value="Genomic_DNA"/>
</dbReference>
<dbReference type="SMR" id="Q2W8R0"/>
<dbReference type="STRING" id="342108.amb0961"/>
<dbReference type="KEGG" id="mag:amb0961"/>
<dbReference type="HOGENOM" id="CLU_642213_0_0_5"/>
<dbReference type="Proteomes" id="UP000007058">
    <property type="component" value="Chromosome"/>
</dbReference>
<dbReference type="GO" id="GO:0110146">
    <property type="term" value="C:magnetosome membrane"/>
    <property type="evidence" value="ECO:0000314"/>
    <property type="project" value="UniProtKB"/>
</dbReference>
<dbReference type="GO" id="GO:0022857">
    <property type="term" value="F:transmembrane transporter activity"/>
    <property type="evidence" value="ECO:0007669"/>
    <property type="project" value="InterPro"/>
</dbReference>
<dbReference type="GO" id="GO:0006826">
    <property type="term" value="P:iron ion transport"/>
    <property type="evidence" value="ECO:0007669"/>
    <property type="project" value="UniProtKB-KW"/>
</dbReference>
<dbReference type="Gene3D" id="1.20.1250.20">
    <property type="entry name" value="MFS general substrate transporter like domains"/>
    <property type="match status" value="1"/>
</dbReference>
<dbReference type="InterPro" id="IPR011701">
    <property type="entry name" value="MFS"/>
</dbReference>
<dbReference type="InterPro" id="IPR020846">
    <property type="entry name" value="MFS_dom"/>
</dbReference>
<dbReference type="InterPro" id="IPR036259">
    <property type="entry name" value="MFS_trans_sf"/>
</dbReference>
<dbReference type="InterPro" id="IPR001958">
    <property type="entry name" value="Tet-R_TetA/multi-R_MdtG-like"/>
</dbReference>
<dbReference type="NCBIfam" id="NF040986">
    <property type="entry name" value="MamH"/>
    <property type="match status" value="1"/>
</dbReference>
<dbReference type="PANTHER" id="PTHR23524:SF1">
    <property type="entry name" value="MRH DOMAIN-CONTAINING PROTEIN-RELATED"/>
    <property type="match status" value="1"/>
</dbReference>
<dbReference type="PANTHER" id="PTHR23524">
    <property type="entry name" value="TRANSPORTER, PUTATIVE (AFU_ORTHOLOGUE AFUA_8G04850)-RELATED"/>
    <property type="match status" value="1"/>
</dbReference>
<dbReference type="Pfam" id="PF07690">
    <property type="entry name" value="MFS_1"/>
    <property type="match status" value="1"/>
</dbReference>
<dbReference type="PRINTS" id="PR01035">
    <property type="entry name" value="TCRTETA"/>
</dbReference>
<dbReference type="SUPFAM" id="SSF103473">
    <property type="entry name" value="MFS general substrate transporter"/>
    <property type="match status" value="1"/>
</dbReference>
<dbReference type="PROSITE" id="PS50850">
    <property type="entry name" value="MFS"/>
    <property type="match status" value="1"/>
</dbReference>
<gene>
    <name type="primary">mamH</name>
    <name type="ordered locus">amb0961</name>
</gene>
<reference key="1">
    <citation type="journal article" date="2005" name="DNA Res.">
        <title>Complete genome sequence of the facultative anaerobic magnetotactic bacterium Magnetospirillum sp. strain AMB-1.</title>
        <authorList>
            <person name="Matsunaga T."/>
            <person name="Okamura Y."/>
            <person name="Fukuda Y."/>
            <person name="Wahyudi A.T."/>
            <person name="Murase Y."/>
            <person name="Takeyama H."/>
        </authorList>
    </citation>
    <scope>NUCLEOTIDE SEQUENCE [LARGE SCALE GENOMIC DNA]</scope>
    <source>
        <strain>ATCC 700264 / AMB-1</strain>
    </source>
</reference>
<reference key="2">
    <citation type="journal article" date="2010" name="Proc. Natl. Acad. Sci. U.S.A.">
        <title>Comprehensive genetic dissection of the magnetosome gene island reveals the step-wise assembly of a prokaryotic organelle.</title>
        <authorList>
            <person name="Murat D."/>
            <person name="Quinlan A."/>
            <person name="Vali H."/>
            <person name="Komeili A."/>
        </authorList>
    </citation>
    <scope>PROBABLE OPERON</scope>
    <scope>DISRUPTION PHENOTYPE</scope>
    <source>
        <strain>ATCC 700264 / AMB-1</strain>
    </source>
</reference>
<reference key="3">
    <citation type="journal article" date="2012" name="Mol. Microbiol.">
        <title>The magnetosome membrane protein, MmsF, is a major regulator of magnetite biomineralization in Magnetospirillum magneticum AMB-1.</title>
        <authorList>
            <person name="Murat D."/>
            <person name="Falahati V."/>
            <person name="Bertinetti L."/>
            <person name="Csencsits R."/>
            <person name="Koernig A."/>
            <person name="Downing K."/>
            <person name="Faivre D."/>
            <person name="Komeili A."/>
        </authorList>
    </citation>
    <scope>MINIMAL MAGNETOSOME ISLAND</scope>
    <source>
        <strain>ATCC 700264 / AMB-1</strain>
    </source>
</reference>
<reference key="4">
    <citation type="journal article" date="2016" name="J. Bacteriol.">
        <title>Comparative subcellular localization analysis of magnetosome proteins reveals a unique localization behavior of Mms6 protein onto magnetite crystals.</title>
        <authorList>
            <person name="Arakaki A."/>
            <person name="Kikuchi D."/>
            <person name="Tanaka M."/>
            <person name="Yamagishi A."/>
            <person name="Yoda T."/>
            <person name="Matsunaga T."/>
        </authorList>
    </citation>
    <scope>SUBCELLULAR LOCATION</scope>
    <source>
        <strain>ATCC 700264 / AMB-1</strain>
    </source>
</reference>
<organism>
    <name type="scientific">Paramagnetospirillum magneticum (strain ATCC 700264 / AMB-1)</name>
    <name type="common">Magnetospirillum magneticum</name>
    <dbReference type="NCBI Taxonomy" id="342108"/>
    <lineage>
        <taxon>Bacteria</taxon>
        <taxon>Pseudomonadati</taxon>
        <taxon>Pseudomonadota</taxon>
        <taxon>Alphaproteobacteria</taxon>
        <taxon>Rhodospirillales</taxon>
        <taxon>Magnetospirillaceae</taxon>
        <taxon>Paramagnetospirillum</taxon>
    </lineage>
</organism>
<proteinExistence type="inferred from homology"/>
<feature type="chain" id="PRO_0000447745" description="Magnetosome protein MamH">
    <location>
        <begin position="1"/>
        <end position="431"/>
    </location>
</feature>
<feature type="transmembrane region" description="Helical" evidence="2">
    <location>
        <begin position="21"/>
        <end position="41"/>
    </location>
</feature>
<feature type="transmembrane region" description="Helical" evidence="2">
    <location>
        <begin position="57"/>
        <end position="77"/>
    </location>
</feature>
<feature type="transmembrane region" description="Helical" evidence="2">
    <location>
        <begin position="86"/>
        <end position="106"/>
    </location>
</feature>
<feature type="transmembrane region" description="Helical" evidence="2">
    <location>
        <begin position="107"/>
        <end position="127"/>
    </location>
</feature>
<feature type="transmembrane region" description="Helical" evidence="2">
    <location>
        <begin position="156"/>
        <end position="176"/>
    </location>
</feature>
<feature type="transmembrane region" description="Helical" evidence="2">
    <location>
        <begin position="178"/>
        <end position="198"/>
    </location>
</feature>
<feature type="transmembrane region" description="Helical" evidence="2">
    <location>
        <begin position="243"/>
        <end position="263"/>
    </location>
</feature>
<feature type="transmembrane region" description="Helical" evidence="2">
    <location>
        <begin position="274"/>
        <end position="294"/>
    </location>
</feature>
<feature type="transmembrane region" description="Helical" evidence="2">
    <location>
        <begin position="302"/>
        <end position="321"/>
    </location>
</feature>
<feature type="transmembrane region" description="Helical" evidence="2">
    <location>
        <begin position="358"/>
        <end position="378"/>
    </location>
</feature>
<feature type="transmembrane region" description="Helical" evidence="2">
    <location>
        <begin position="380"/>
        <end position="400"/>
    </location>
</feature>
<accession>Q2W8R0</accession>
<comment type="function">
    <text evidence="1">Required for correct biomineralization of the magnetosome; probably transports some form of iron. Partially functionally redundant with MamZ.</text>
</comment>
<comment type="subcellular location">
    <subcellularLocation>
        <location evidence="5">Magnetosome membrane</location>
        <topology evidence="2">Multi-pass membrane protein</topology>
    </subcellularLocation>
    <text evidence="5">Tagged protein forms straight lines with a punctate pattern extending along most of the cell associated with its inner curvature, in the correct position to be associated with magnetosomes, but longer than the usual chain.</text>
</comment>
<comment type="induction">
    <text evidence="7">First gene of the probable 18 gene mamAB operon.</text>
</comment>
<comment type="disruption phenotype">
    <text evidence="3">No visible phenotype, magnetic response is slightly reduced and magnetosome membrane formation is wild-type (PubMed:20212111). Deletion of genes mamH to mamV (amb0961 to amb0978) gives cells with no magnetosomes and no magnetic response (PubMed:20212111).</text>
</comment>
<comment type="miscellaneous">
    <text evidence="6">This bacteria makes up to 20 cubo-octahedral magnetosomes of about 45 nm in diameter which contain membrane-bound crystals of magnetite (Fe(3)O(4)).</text>
</comment>
<comment type="miscellaneous">
    <text evidence="4">Expression of just the minimal mamAB gene cluster (amb0961 to amb0978), including this gene, is sufficient to form a minimal magnetosome chain with small magnetite particles.</text>
</comment>
<comment type="similarity">
    <text evidence="6">Belongs to the major facilitator superfamily.</text>
</comment>
<sequence length="431" mass="46024">MSRVEAAAAEVKVRQHNALYLLSALCMVFMTLVVAIQPLFLRNVLNISFETAGAVNANVQVVTEVLDLFIFAYLGYLSDRIGRVRIIVAGFLVAAIGAVIAPLSPWIGGASIGALVVYYVSRVIMSAGSGAVWPQLSALAGDFSDDDTRARLMSNTAFMMAFGVTLVYAVLMQIPAHAGIAVTMLLTAAVSLAGAWLAGKFLVDVAPRTQETSVPWRAVWSLVKAEPRLRLAFASSLFARSDMVFVGLFLMLWFIYFADLIKVGQAEAAARAGILIGLMGAVVMLSIPVWRSFIEHFGRIQAVLLGMVLSALGFIMLGFIINPFDWFIVLPILLIASGQAGCFVAPQILTVDYAPRDLLGSVLGAFNVIGCIGIIFFVQVGGFLFDYVGPPAPFVFTGVGNLIISAYALRLLKREARDGGGDDAPGDDGVA</sequence>
<evidence type="ECO:0000250" key="1">
    <source>
        <dbReference type="UniProtKB" id="Q6NE63"/>
    </source>
</evidence>
<evidence type="ECO:0000255" key="2"/>
<evidence type="ECO:0000269" key="3">
    <source>
    </source>
</evidence>
<evidence type="ECO:0000269" key="4">
    <source>
    </source>
</evidence>
<evidence type="ECO:0000269" key="5">
    <source>
    </source>
</evidence>
<evidence type="ECO:0000305" key="6"/>
<evidence type="ECO:0000305" key="7">
    <source>
    </source>
</evidence>